<feature type="chain" id="PRO_0000338964" description="Translation initiation factor IF-1, chloroplastic">
    <location>
        <begin position="1"/>
        <end position="80"/>
    </location>
</feature>
<feature type="domain" description="S1-like" evidence="1">
    <location>
        <begin position="1"/>
        <end position="74"/>
    </location>
</feature>
<dbReference type="EMBL" id="EF380354">
    <property type="protein sequence ID" value="ABQ52553.1"/>
    <property type="molecule type" value="Genomic_DNA"/>
</dbReference>
<dbReference type="RefSeq" id="YP_001294305.1">
    <property type="nucleotide sequence ID" value="NC_009600.1"/>
</dbReference>
<dbReference type="SMR" id="A6MMX9"/>
<dbReference type="GeneID" id="5236755"/>
<dbReference type="GO" id="GO:0009507">
    <property type="term" value="C:chloroplast"/>
    <property type="evidence" value="ECO:0007669"/>
    <property type="project" value="UniProtKB-SubCell"/>
</dbReference>
<dbReference type="GO" id="GO:0005829">
    <property type="term" value="C:cytosol"/>
    <property type="evidence" value="ECO:0007669"/>
    <property type="project" value="TreeGrafter"/>
</dbReference>
<dbReference type="GO" id="GO:0043022">
    <property type="term" value="F:ribosome binding"/>
    <property type="evidence" value="ECO:0007669"/>
    <property type="project" value="UniProtKB-UniRule"/>
</dbReference>
<dbReference type="GO" id="GO:0019843">
    <property type="term" value="F:rRNA binding"/>
    <property type="evidence" value="ECO:0007669"/>
    <property type="project" value="UniProtKB-UniRule"/>
</dbReference>
<dbReference type="GO" id="GO:0003743">
    <property type="term" value="F:translation initiation factor activity"/>
    <property type="evidence" value="ECO:0007669"/>
    <property type="project" value="UniProtKB-UniRule"/>
</dbReference>
<dbReference type="CDD" id="cd04451">
    <property type="entry name" value="S1_IF1"/>
    <property type="match status" value="1"/>
</dbReference>
<dbReference type="FunFam" id="2.40.50.140:FF:000019">
    <property type="entry name" value="Translation initiation factor IF-1, chloroplastic"/>
    <property type="match status" value="1"/>
</dbReference>
<dbReference type="Gene3D" id="2.40.50.140">
    <property type="entry name" value="Nucleic acid-binding proteins"/>
    <property type="match status" value="1"/>
</dbReference>
<dbReference type="HAMAP" id="MF_00075">
    <property type="entry name" value="IF_1"/>
    <property type="match status" value="1"/>
</dbReference>
<dbReference type="InterPro" id="IPR012340">
    <property type="entry name" value="NA-bd_OB-fold"/>
</dbReference>
<dbReference type="InterPro" id="IPR006196">
    <property type="entry name" value="RNA-binding_domain_S1_IF1"/>
</dbReference>
<dbReference type="InterPro" id="IPR004368">
    <property type="entry name" value="TIF_IF1"/>
</dbReference>
<dbReference type="NCBIfam" id="TIGR00008">
    <property type="entry name" value="infA"/>
    <property type="match status" value="1"/>
</dbReference>
<dbReference type="PANTHER" id="PTHR33370">
    <property type="entry name" value="TRANSLATION INITIATION FACTOR IF-1, CHLOROPLASTIC"/>
    <property type="match status" value="1"/>
</dbReference>
<dbReference type="PANTHER" id="PTHR33370:SF1">
    <property type="entry name" value="TRANSLATION INITIATION FACTOR IF-1, CHLOROPLASTIC"/>
    <property type="match status" value="1"/>
</dbReference>
<dbReference type="Pfam" id="PF01176">
    <property type="entry name" value="eIF-1a"/>
    <property type="match status" value="1"/>
</dbReference>
<dbReference type="SUPFAM" id="SSF50249">
    <property type="entry name" value="Nucleic acid-binding proteins"/>
    <property type="match status" value="1"/>
</dbReference>
<dbReference type="PROSITE" id="PS50832">
    <property type="entry name" value="S1_IF1_TYPE"/>
    <property type="match status" value="1"/>
</dbReference>
<comment type="function">
    <text evidence="1">One of the essential components for the initiation of protein synthesis. Stabilizes the binding of IF-2 and IF-3 on the 30S subunit to which N-formylmethionyl-tRNA(fMet) subsequently binds. Helps modulate mRNA selection, yielding the 30S pre-initiation complex (PIC). Upon addition of the 50S ribosomal subunit IF-1, IF-2 and IF-3 are released leaving the mature 70S translation initiation complex.</text>
</comment>
<comment type="subunit">
    <text evidence="1">Component of the 30S ribosomal translation pre-initiation complex which assembles on the 30S ribosome in the order IF-2 and IF-3, IF-1 and N-formylmethionyl-tRNA(fMet); mRNA recruitment can occur at any time during PIC assembly.</text>
</comment>
<comment type="subcellular location">
    <subcellularLocation>
        <location evidence="1">Plastid</location>
        <location evidence="1">Chloroplast</location>
    </subcellularLocation>
</comment>
<comment type="similarity">
    <text evidence="1">Belongs to the IF-1 family.</text>
</comment>
<sequence length="80" mass="9492">MKEQKWIHEGLITESLPNGMFRVRLDNVDNEDLILGYVSGRIRRSFIRILPGDRVKIEVSRYDSTRGRIIYRLRNKDSND</sequence>
<evidence type="ECO:0000255" key="1">
    <source>
        <dbReference type="HAMAP-Rule" id="MF_00075"/>
    </source>
</evidence>
<keyword id="KW-0150">Chloroplast</keyword>
<keyword id="KW-0396">Initiation factor</keyword>
<keyword id="KW-0934">Plastid</keyword>
<keyword id="KW-0648">Protein biosynthesis</keyword>
<keyword id="KW-0694">RNA-binding</keyword>
<keyword id="KW-0699">rRNA-binding</keyword>
<gene>
    <name evidence="1" type="primary">infA</name>
</gene>
<name>IF1C_ILLOL</name>
<organism>
    <name type="scientific">Illicium oligandrum</name>
    <name type="common">Star anise</name>
    <dbReference type="NCBI Taxonomy" id="145286"/>
    <lineage>
        <taxon>Eukaryota</taxon>
        <taxon>Viridiplantae</taxon>
        <taxon>Streptophyta</taxon>
        <taxon>Embryophyta</taxon>
        <taxon>Tracheophyta</taxon>
        <taxon>Spermatophyta</taxon>
        <taxon>Magnoliopsida</taxon>
        <taxon>Austrobaileyales</taxon>
        <taxon>Schisandraceae</taxon>
        <taxon>Illicium</taxon>
    </lineage>
</organism>
<geneLocation type="chloroplast"/>
<reference key="1">
    <citation type="journal article" date="2007" name="Mol. Phylogenet. Evol.">
        <title>Phylogenetic and evolutionary implications of complete chloroplast genome sequences of four early-diverging angiosperms: Buxus (Buxaceae), Chloranthus (Chloranthaceae), Dioscorea (Dioscoreaceae), and Illicium (Schisandraceae).</title>
        <authorList>
            <person name="Hansen D.R."/>
            <person name="Dastidar S.G."/>
            <person name="Cai Z."/>
            <person name="Penaflor C."/>
            <person name="Kuehl J.V."/>
            <person name="Boore J.L."/>
            <person name="Jansen R.K."/>
        </authorList>
    </citation>
    <scope>NUCLEOTIDE SEQUENCE [LARGE SCALE GENOMIC DNA]</scope>
</reference>
<accession>A6MMX9</accession>
<proteinExistence type="inferred from homology"/>
<protein>
    <recommendedName>
        <fullName evidence="1">Translation initiation factor IF-1, chloroplastic</fullName>
    </recommendedName>
</protein>